<organism>
    <name type="scientific">Caenorhabditis elegans</name>
    <dbReference type="NCBI Taxonomy" id="6239"/>
    <lineage>
        <taxon>Eukaryota</taxon>
        <taxon>Metazoa</taxon>
        <taxon>Ecdysozoa</taxon>
        <taxon>Nematoda</taxon>
        <taxon>Chromadorea</taxon>
        <taxon>Rhabditida</taxon>
        <taxon>Rhabditina</taxon>
        <taxon>Rhabditomorpha</taxon>
        <taxon>Rhabditoidea</taxon>
        <taxon>Rhabditidae</taxon>
        <taxon>Peloderinae</taxon>
        <taxon>Caenorhabditis</taxon>
    </lineage>
</organism>
<reference key="1">
    <citation type="journal article" date="1995" name="Mol. Biol. Cell">
        <title>The C. elegans sex-determining gene fem-2 encodes a putative protein phosphatase.</title>
        <authorList>
            <person name="Pilgrim D.B."/>
            <person name="McGregor A."/>
            <person name="Jaeckle P."/>
            <person name="Johnson T."/>
            <person name="Hansen D."/>
        </authorList>
    </citation>
    <scope>NUCLEOTIDE SEQUENCE [GENOMIC DNA]</scope>
    <source>
        <strain>Bristol N2</strain>
    </source>
</reference>
<reference key="2">
    <citation type="journal article" date="1998" name="Science">
        <title>Genome sequence of the nematode C. elegans: a platform for investigating biology.</title>
        <authorList>
            <consortium name="The C. elegans sequencing consortium"/>
        </authorList>
    </citation>
    <scope>NUCLEOTIDE SEQUENCE [LARGE SCALE GENOMIC DNA]</scope>
    <source>
        <strain>Bristol N2</strain>
    </source>
</reference>
<reference key="3">
    <citation type="journal article" date="1996" name="Genes Dev.">
        <title>Caenorhabditis elegans sex-determining protein FEM-2 is a protein phosphatase that promotes male development and interacts directly with FEM-3.</title>
        <authorList>
            <person name="Chin-Sang I.D."/>
            <person name="Spence A.M."/>
        </authorList>
    </citation>
    <scope>FUNCTION</scope>
    <scope>CATALYTIC ACTIVITY</scope>
    <scope>COFACTOR</scope>
    <scope>INTERACTION WITH FEM-3</scope>
    <scope>MUTAGENESIS OF ARG-336</scope>
</reference>
<reference key="4">
    <citation type="journal article" date="2001" name="J. Biol. Chem.">
        <title>The Caenorhabditis elegans sex-determining protein fem-2 and its human homologue, hFEM-2, are Ca2+/calmodulin-dependent protein kinase phosphatases that promote apoptosis.</title>
        <authorList>
            <person name="Tan K.M.L."/>
            <person name="Chan S.-L."/>
            <person name="Tan K.O."/>
            <person name="Yu V.C."/>
        </authorList>
    </citation>
    <scope>FUNCTION</scope>
    <scope>CATALYTIC ACTIVITY</scope>
    <scope>COFACTOR</scope>
</reference>
<reference key="5">
    <citation type="journal article" date="2004" name="Proc. Natl. Acad. Sci. U.S.A.">
        <title>The Caenorhabditis elegans F-box protein SEL-10 promotes female development and may target FEM-1 and FEM-3 for degradation by the proteasome.</title>
        <authorList>
            <person name="Jaeger S."/>
            <person name="Schwartz H.T."/>
            <person name="Horvitz H.R."/>
            <person name="Conradt B."/>
        </authorList>
    </citation>
    <scope>INTERACTION WITH SEL-10</scope>
</reference>
<reference key="6">
    <citation type="journal article" date="2007" name="Dev. Cell">
        <title>A CUL-2 ubiquitin ligase containing three FEM proteins degrades TRA-1 to regulate C. elegans sex determination.</title>
        <authorList>
            <person name="Starostina N.G."/>
            <person name="Lim J.M."/>
            <person name="Schvarzstein M."/>
            <person name="Wells L."/>
            <person name="Spence A.M."/>
            <person name="Kipreos E.T."/>
        </authorList>
    </citation>
    <scope>FUNCTION</scope>
    <scope>IDENTIFICATION IN THE CBC(FEM-1) COMPLEX</scope>
    <scope>INTERACTION WITH TRA-1; FEM-1 AND FEM-3</scope>
</reference>
<reference key="7">
    <citation type="journal article" date="2013" name="J. Biol. Chem.">
        <title>Structural insight into Caenorhabditis elegans sex-determining protein FEM-2.</title>
        <authorList>
            <person name="Zhang Y."/>
            <person name="Zhao H."/>
            <person name="Wang J."/>
            <person name="Ge J."/>
            <person name="Li Y."/>
            <person name="Gu J."/>
            <person name="Li P."/>
            <person name="Feng Y."/>
            <person name="Yang M."/>
        </authorList>
    </citation>
    <scope>X-RAY CRYSTALLOGRAPHY (1.65 ANGSTROMS) IN COMPLEX WITH MAGNESIUM</scope>
    <scope>IDENTIFICATION IN A COMPLEX WITH FEM-1 AND FEM-3</scope>
    <scope>INTERACTION WITH FEM-1 AND FEM-3</scope>
    <scope>CATALYTIC ACTIVITY</scope>
    <scope>MUTAGENESIS OF 2-GLU--ASP-41; 28-GLU--GLU-34; 54-ILE--PHE-56; 71-ASP--ASP-75; ASP-202; ASP-370 AND ASP-415</scope>
</reference>
<sequence>MEKVNEERDAVFEDHIGDRRRSVRSLLEEAFADEMEKTSYDVEVADTPQPHIPIRFRHPPIAGPVHDVFGDAIHDIFQKMMKRGQAVDFCHWVSHLIATEIDEKFSEVAFRDVQYNPDIYVTDSTTEAKKLFNDKIWPAIDKILQQNAETCPILSEKWSGIHVSGDQLKGQRHKQEDRFLAYPNGQYMDRGEDPISVLAVFDGHGGHECSQYAAGHLWETWLEVRKSRDPSDSLEDQLRKSLELLDERMTVRSVKECWKGGSTAVCCAIDMDQKLMALAWLGDSPGYVMSNIEFRQLTRGHSPSDEREARRVEEAGGQLFVIGGELRVNGVLNLTRALGDVPGRPMISNEPETCQVPIESSDYLVLLACDGISDVFNERDLYQLVEAFANDYPVEDYAELSRFICTKAIEAGSADNVSVVIGFLRPPQDVWKLMKHESDDEDSDVTDEE</sequence>
<dbReference type="EC" id="3.1.3.16" evidence="2 5 6"/>
<dbReference type="EMBL" id="U29515">
    <property type="protein sequence ID" value="AAC06328.1"/>
    <property type="molecule type" value="Genomic_DNA"/>
</dbReference>
<dbReference type="EMBL" id="FO081735">
    <property type="protein sequence ID" value="CCD73740.1"/>
    <property type="molecule type" value="Genomic_DNA"/>
</dbReference>
<dbReference type="PIR" id="T16891">
    <property type="entry name" value="T16891"/>
</dbReference>
<dbReference type="RefSeq" id="NP_497224.1">
    <property type="nucleotide sequence ID" value="NM_064823.10"/>
</dbReference>
<dbReference type="PDB" id="4JND">
    <property type="method" value="X-ray"/>
    <property type="resolution" value="1.65 A"/>
    <property type="chains" value="A=1-449"/>
</dbReference>
<dbReference type="PDBsum" id="4JND"/>
<dbReference type="SMR" id="P49594"/>
<dbReference type="BioGRID" id="40488">
    <property type="interactions" value="19"/>
</dbReference>
<dbReference type="ComplexPortal" id="CPX-3385">
    <property type="entry name" value="Fem-2 phosphatase complex"/>
</dbReference>
<dbReference type="FunCoup" id="P49594">
    <property type="interactions" value="1635"/>
</dbReference>
<dbReference type="IntAct" id="P49594">
    <property type="interactions" value="14"/>
</dbReference>
<dbReference type="MINT" id="P49594"/>
<dbReference type="STRING" id="6239.T19C3.8.2"/>
<dbReference type="PaxDb" id="6239-T19C3.8"/>
<dbReference type="PeptideAtlas" id="P49594"/>
<dbReference type="EnsemblMetazoa" id="T19C3.8.1">
    <property type="protein sequence ID" value="T19C3.8.1"/>
    <property type="gene ID" value="WBGene00001412"/>
</dbReference>
<dbReference type="GeneID" id="175217"/>
<dbReference type="KEGG" id="cel:CELE_T19C3.8"/>
<dbReference type="UCSC" id="T19C3.8">
    <property type="organism name" value="c. elegans"/>
</dbReference>
<dbReference type="AGR" id="WB:WBGene00001412"/>
<dbReference type="CTD" id="175217"/>
<dbReference type="WormBase" id="T19C3.8">
    <property type="protein sequence ID" value="CE02878"/>
    <property type="gene ID" value="WBGene00001412"/>
    <property type="gene designation" value="fem-2"/>
</dbReference>
<dbReference type="eggNOG" id="KOG0698">
    <property type="taxonomic scope" value="Eukaryota"/>
</dbReference>
<dbReference type="GeneTree" id="ENSGT00940000156633"/>
<dbReference type="HOGENOM" id="CLU_610072_0_0_1"/>
<dbReference type="InParanoid" id="P49594"/>
<dbReference type="OMA" id="GGHECSQ"/>
<dbReference type="OrthoDB" id="10264738at2759"/>
<dbReference type="PhylomeDB" id="P49594"/>
<dbReference type="SignaLink" id="P49594"/>
<dbReference type="EvolutionaryTrace" id="P49594"/>
<dbReference type="PRO" id="PR:P49594"/>
<dbReference type="Proteomes" id="UP000001940">
    <property type="component" value="Chromosome III"/>
</dbReference>
<dbReference type="Bgee" id="WBGene00001412">
    <property type="expression patterns" value="Expressed in germ line (C elegans) and 4 other cell types or tissues"/>
</dbReference>
<dbReference type="GO" id="GO:0031462">
    <property type="term" value="C:Cul2-RING ubiquitin ligase complex"/>
    <property type="evidence" value="ECO:0000314"/>
    <property type="project" value="ComplexPortal"/>
</dbReference>
<dbReference type="GO" id="GO:0008287">
    <property type="term" value="C:protein serine/threonine phosphatase complex"/>
    <property type="evidence" value="ECO:0000314"/>
    <property type="project" value="ComplexPortal"/>
</dbReference>
<dbReference type="GO" id="GO:0032991">
    <property type="term" value="C:protein-containing complex"/>
    <property type="evidence" value="ECO:0000315"/>
    <property type="project" value="UniProtKB"/>
</dbReference>
<dbReference type="GO" id="GO:0033192">
    <property type="term" value="F:calmodulin-dependent protein phosphatase activity"/>
    <property type="evidence" value="ECO:0000314"/>
    <property type="project" value="UniProtKB"/>
</dbReference>
<dbReference type="GO" id="GO:0046872">
    <property type="term" value="F:metal ion binding"/>
    <property type="evidence" value="ECO:0007669"/>
    <property type="project" value="UniProtKB-KW"/>
</dbReference>
<dbReference type="GO" id="GO:0004721">
    <property type="term" value="F:phosphoprotein phosphatase activity"/>
    <property type="evidence" value="ECO:0000314"/>
    <property type="project" value="WormBase"/>
</dbReference>
<dbReference type="GO" id="GO:0004722">
    <property type="term" value="F:protein serine/threonine phosphatase activity"/>
    <property type="evidence" value="ECO:0000314"/>
    <property type="project" value="UniProtKB"/>
</dbReference>
<dbReference type="GO" id="GO:0006915">
    <property type="term" value="P:apoptotic process"/>
    <property type="evidence" value="ECO:0007669"/>
    <property type="project" value="UniProtKB-KW"/>
</dbReference>
<dbReference type="GO" id="GO:0030154">
    <property type="term" value="P:cell differentiation"/>
    <property type="evidence" value="ECO:0007669"/>
    <property type="project" value="UniProtKB-KW"/>
</dbReference>
<dbReference type="GO" id="GO:0035556">
    <property type="term" value="P:intracellular signal transduction"/>
    <property type="evidence" value="ECO:0000314"/>
    <property type="project" value="UniProtKB"/>
</dbReference>
<dbReference type="GO" id="GO:0030238">
    <property type="term" value="P:male sex determination"/>
    <property type="evidence" value="ECO:0000315"/>
    <property type="project" value="WormBase"/>
</dbReference>
<dbReference type="GO" id="GO:0042006">
    <property type="term" value="P:masculinization of hermaphroditic germ-line"/>
    <property type="evidence" value="ECO:0000315"/>
    <property type="project" value="WormBase"/>
</dbReference>
<dbReference type="GO" id="GO:0045138">
    <property type="term" value="P:nematode male tail tip morphogenesis"/>
    <property type="evidence" value="ECO:0000315"/>
    <property type="project" value="WormBase"/>
</dbReference>
<dbReference type="GO" id="GO:0035970">
    <property type="term" value="P:peptidyl-threonine dephosphorylation"/>
    <property type="evidence" value="ECO:0000315"/>
    <property type="project" value="UniProtKB"/>
</dbReference>
<dbReference type="GO" id="GO:0007530">
    <property type="term" value="P:sex determination"/>
    <property type="evidence" value="ECO:0000315"/>
    <property type="project" value="ComplexPortal"/>
</dbReference>
<dbReference type="GO" id="GO:0007165">
    <property type="term" value="P:signal transduction"/>
    <property type="evidence" value="ECO:0000318"/>
    <property type="project" value="GO_Central"/>
</dbReference>
<dbReference type="CDD" id="cd00143">
    <property type="entry name" value="PP2Cc"/>
    <property type="match status" value="1"/>
</dbReference>
<dbReference type="FunFam" id="1.10.1740.220:FF:000001">
    <property type="entry name" value="Protein phosphatase fem-2"/>
    <property type="match status" value="1"/>
</dbReference>
<dbReference type="FunFam" id="3.60.40.10:FF:000182">
    <property type="entry name" value="Protein phosphatase fem-2"/>
    <property type="match status" value="1"/>
</dbReference>
<dbReference type="Gene3D" id="1.10.1740.220">
    <property type="match status" value="1"/>
</dbReference>
<dbReference type="Gene3D" id="3.60.40.10">
    <property type="entry name" value="PPM-type phosphatase domain"/>
    <property type="match status" value="1"/>
</dbReference>
<dbReference type="InterPro" id="IPR015655">
    <property type="entry name" value="PP2C"/>
</dbReference>
<dbReference type="InterPro" id="IPR000222">
    <property type="entry name" value="PP2C_BS"/>
</dbReference>
<dbReference type="InterPro" id="IPR036457">
    <property type="entry name" value="PPM-type-like_dom_sf"/>
</dbReference>
<dbReference type="InterPro" id="IPR001932">
    <property type="entry name" value="PPM-type_phosphatase-like_dom"/>
</dbReference>
<dbReference type="PANTHER" id="PTHR13832">
    <property type="entry name" value="PROTEIN PHOSPHATASE 2C"/>
    <property type="match status" value="1"/>
</dbReference>
<dbReference type="PANTHER" id="PTHR13832:SF741">
    <property type="entry name" value="PROTEIN PHOSPHATASE FEM-2"/>
    <property type="match status" value="1"/>
</dbReference>
<dbReference type="Pfam" id="PF00481">
    <property type="entry name" value="PP2C"/>
    <property type="match status" value="1"/>
</dbReference>
<dbReference type="SMART" id="SM00331">
    <property type="entry name" value="PP2C_SIG"/>
    <property type="match status" value="1"/>
</dbReference>
<dbReference type="SMART" id="SM00332">
    <property type="entry name" value="PP2Cc"/>
    <property type="match status" value="1"/>
</dbReference>
<dbReference type="SUPFAM" id="SSF81606">
    <property type="entry name" value="PP2C-like"/>
    <property type="match status" value="1"/>
</dbReference>
<dbReference type="PROSITE" id="PS01032">
    <property type="entry name" value="PPM_1"/>
    <property type="match status" value="1"/>
</dbReference>
<dbReference type="PROSITE" id="PS51746">
    <property type="entry name" value="PPM_2"/>
    <property type="match status" value="1"/>
</dbReference>
<feature type="chain" id="PRO_0000057761" description="Protein phosphatase fem-2">
    <location>
        <begin position="1"/>
        <end position="449"/>
    </location>
</feature>
<feature type="domain" description="PPM-type phosphatase" evidence="1">
    <location>
        <begin position="160"/>
        <end position="424"/>
    </location>
</feature>
<feature type="region of interest" description="Interaction with fem-1 and fem-3" evidence="5">
    <location>
        <begin position="28"/>
        <end position="34"/>
    </location>
</feature>
<feature type="region of interest" description="Interaction with fem-3" evidence="5">
    <location>
        <begin position="54"/>
        <end position="56"/>
    </location>
</feature>
<feature type="binding site" evidence="5 11">
    <location>
        <position position="202"/>
    </location>
    <ligand>
        <name>Mg(2+)</name>
        <dbReference type="ChEBI" id="CHEBI:18420"/>
        <label>1</label>
    </ligand>
</feature>
<feature type="binding site" evidence="5 11">
    <location>
        <position position="202"/>
    </location>
    <ligand>
        <name>Mg(2+)</name>
        <dbReference type="ChEBI" id="CHEBI:18420"/>
        <label>2</label>
    </ligand>
</feature>
<feature type="binding site" evidence="5 11">
    <location>
        <position position="203"/>
    </location>
    <ligand>
        <name>Mg(2+)</name>
        <dbReference type="ChEBI" id="CHEBI:18420"/>
        <label>1</label>
    </ligand>
</feature>
<feature type="binding site" evidence="5 11">
    <location>
        <position position="370"/>
    </location>
    <ligand>
        <name>Mg(2+)</name>
        <dbReference type="ChEBI" id="CHEBI:18420"/>
        <label>2</label>
    </ligand>
</feature>
<feature type="binding site" evidence="5 11">
    <location>
        <position position="415"/>
    </location>
    <ligand>
        <name>Mg(2+)</name>
        <dbReference type="ChEBI" id="CHEBI:18420"/>
        <label>2</label>
    </ligand>
</feature>
<feature type="mutagenesis site" description="Severe reduction in the interaction with fem-1 and fem-3." evidence="5">
    <location>
        <begin position="2"/>
        <end position="41"/>
    </location>
</feature>
<feature type="mutagenesis site" description="Severe reduction in the interaction with fem-1 and fem-3." evidence="5">
    <original>EEAFADE</original>
    <variation>AAAFAAA</variation>
    <location>
        <begin position="28"/>
        <end position="34"/>
    </location>
</feature>
<feature type="mutagenesis site" description="Abolishes the interaction with fem-3 but not with fem-1." evidence="5">
    <original>IRF</original>
    <variation>AAA</variation>
    <location>
        <begin position="54"/>
        <end position="56"/>
    </location>
</feature>
<feature type="mutagenesis site" description="No effect on the interaction with fem-3 and fem-1." evidence="5">
    <original>DAIHD</original>
    <variation>AAIAA</variation>
    <location>
        <begin position="71"/>
        <end position="75"/>
    </location>
</feature>
<feature type="mutagenesis site" description="Loss of catalytic activity." evidence="5">
    <original>D</original>
    <variation>A</variation>
    <location>
        <position position="202"/>
    </location>
</feature>
<feature type="mutagenesis site" description="Loss of catalytic activity. Prevents male development. No effect on the interaction with fem-3." evidence="6">
    <original>R</original>
    <variation>K</variation>
    <variation>A</variation>
    <location>
        <position position="336"/>
    </location>
</feature>
<feature type="mutagenesis site" description="Loss of catalytic activity." evidence="5">
    <original>D</original>
    <variation>A</variation>
    <location>
        <position position="370"/>
    </location>
</feature>
<feature type="mutagenesis site" description="Severe loss of catalytic activity." evidence="5">
    <original>D</original>
    <variation>A</variation>
    <location>
        <position position="415"/>
    </location>
</feature>
<feature type="helix" evidence="12">
    <location>
        <begin position="17"/>
        <end position="20"/>
    </location>
</feature>
<feature type="helix" evidence="12">
    <location>
        <begin position="23"/>
        <end position="30"/>
    </location>
</feature>
<feature type="helix" evidence="12">
    <location>
        <begin position="32"/>
        <end position="39"/>
    </location>
</feature>
<feature type="helix" evidence="12">
    <location>
        <begin position="65"/>
        <end position="67"/>
    </location>
</feature>
<feature type="helix" evidence="12">
    <location>
        <begin position="68"/>
        <end position="82"/>
    </location>
</feature>
<feature type="helix" evidence="12">
    <location>
        <begin position="87"/>
        <end position="105"/>
    </location>
</feature>
<feature type="helix" evidence="12">
    <location>
        <begin position="110"/>
        <end position="112"/>
    </location>
</feature>
<feature type="helix" evidence="12">
    <location>
        <begin position="125"/>
        <end position="134"/>
    </location>
</feature>
<feature type="helix" evidence="12">
    <location>
        <begin position="136"/>
        <end position="144"/>
    </location>
</feature>
<feature type="turn" evidence="12">
    <location>
        <begin position="148"/>
        <end position="150"/>
    </location>
</feature>
<feature type="helix" evidence="12">
    <location>
        <begin position="152"/>
        <end position="155"/>
    </location>
</feature>
<feature type="strand" evidence="12">
    <location>
        <begin position="163"/>
        <end position="168"/>
    </location>
</feature>
<feature type="strand" evidence="12">
    <location>
        <begin position="171"/>
        <end position="174"/>
    </location>
</feature>
<feature type="strand" evidence="12">
    <location>
        <begin position="177"/>
        <end position="184"/>
    </location>
</feature>
<feature type="turn" evidence="12">
    <location>
        <begin position="185"/>
        <end position="188"/>
    </location>
</feature>
<feature type="strand" evidence="12">
    <location>
        <begin position="189"/>
        <end position="191"/>
    </location>
</feature>
<feature type="strand" evidence="12">
    <location>
        <begin position="196"/>
        <end position="207"/>
    </location>
</feature>
<feature type="helix" evidence="12">
    <location>
        <begin position="208"/>
        <end position="227"/>
    </location>
</feature>
<feature type="helix" evidence="12">
    <location>
        <begin position="234"/>
        <end position="256"/>
    </location>
</feature>
<feature type="strand" evidence="12">
    <location>
        <begin position="264"/>
        <end position="270"/>
    </location>
</feature>
<feature type="turn" evidence="12">
    <location>
        <begin position="271"/>
        <end position="274"/>
    </location>
</feature>
<feature type="strand" evidence="12">
    <location>
        <begin position="275"/>
        <end position="283"/>
    </location>
</feature>
<feature type="strand" evidence="12">
    <location>
        <begin position="286"/>
        <end position="292"/>
    </location>
</feature>
<feature type="strand" evidence="12">
    <location>
        <begin position="294"/>
        <end position="296"/>
    </location>
</feature>
<feature type="helix" evidence="12">
    <location>
        <begin position="306"/>
        <end position="314"/>
    </location>
</feature>
<feature type="strand" evidence="12">
    <location>
        <begin position="319"/>
        <end position="322"/>
    </location>
</feature>
<feature type="strand" evidence="12">
    <location>
        <begin position="325"/>
        <end position="328"/>
    </location>
</feature>
<feature type="turn" evidence="12">
    <location>
        <begin position="329"/>
        <end position="331"/>
    </location>
</feature>
<feature type="helix" evidence="12">
    <location>
        <begin position="341"/>
        <end position="343"/>
    </location>
</feature>
<feature type="turn" evidence="12">
    <location>
        <begin position="344"/>
        <end position="346"/>
    </location>
</feature>
<feature type="strand" evidence="12">
    <location>
        <begin position="352"/>
        <end position="357"/>
    </location>
</feature>
<feature type="strand" evidence="12">
    <location>
        <begin position="362"/>
        <end position="368"/>
    </location>
</feature>
<feature type="helix" evidence="12">
    <location>
        <begin position="370"/>
        <end position="373"/>
    </location>
</feature>
<feature type="helix" evidence="12">
    <location>
        <begin position="378"/>
        <end position="391"/>
    </location>
</feature>
<feature type="helix" evidence="12">
    <location>
        <begin position="394"/>
        <end position="399"/>
    </location>
</feature>
<feature type="helix" evidence="12">
    <location>
        <begin position="400"/>
        <end position="410"/>
    </location>
</feature>
<feature type="strand" evidence="12">
    <location>
        <begin position="417"/>
        <end position="425"/>
    </location>
</feature>
<feature type="helix" evidence="12">
    <location>
        <begin position="427"/>
        <end position="434"/>
    </location>
</feature>
<name>FEM2_CAEEL</name>
<proteinExistence type="evidence at protein level"/>
<accession>P49594</accession>
<keyword id="KW-0002">3D-structure</keyword>
<keyword id="KW-0053">Apoptosis</keyword>
<keyword id="KW-0217">Developmental protein</keyword>
<keyword id="KW-0221">Differentiation</keyword>
<keyword id="KW-0378">Hydrolase</keyword>
<keyword id="KW-0460">Magnesium</keyword>
<keyword id="KW-0464">Manganese</keyword>
<keyword id="KW-0479">Metal-binding</keyword>
<keyword id="KW-0904">Protein phosphatase</keyword>
<keyword id="KW-1185">Reference proteome</keyword>
<keyword id="KW-0726">Sexual differentiation</keyword>
<keyword id="KW-0833">Ubl conjugation pathway</keyword>
<comment type="function">
    <text evidence="2 4 5 6">Dephosphorylates auto-phosphorylated Ca(2+)/calmodulin-dependent protein kinase unc-43/CAMKII in vitro (PubMed:11559703, PubMed:23760267). Involved in the regulation of sex determination (PubMed:8824590). Together with fem-3, required for male sexual development by promoting the proteasomal-mediated degradation of tra-1, a transcription repressor of male-specific genes (PubMed:17609115). Promotes apoptosis (PubMed:11559703).</text>
</comment>
<comment type="catalytic activity">
    <reaction evidence="2 5 6">
        <text>O-phospho-L-seryl-[protein] + H2O = L-seryl-[protein] + phosphate</text>
        <dbReference type="Rhea" id="RHEA:20629"/>
        <dbReference type="Rhea" id="RHEA-COMP:9863"/>
        <dbReference type="Rhea" id="RHEA-COMP:11604"/>
        <dbReference type="ChEBI" id="CHEBI:15377"/>
        <dbReference type="ChEBI" id="CHEBI:29999"/>
        <dbReference type="ChEBI" id="CHEBI:43474"/>
        <dbReference type="ChEBI" id="CHEBI:83421"/>
        <dbReference type="EC" id="3.1.3.16"/>
    </reaction>
</comment>
<comment type="catalytic activity">
    <reaction evidence="2 5 6">
        <text>O-phospho-L-threonyl-[protein] + H2O = L-threonyl-[protein] + phosphate</text>
        <dbReference type="Rhea" id="RHEA:47004"/>
        <dbReference type="Rhea" id="RHEA-COMP:11060"/>
        <dbReference type="Rhea" id="RHEA-COMP:11605"/>
        <dbReference type="ChEBI" id="CHEBI:15377"/>
        <dbReference type="ChEBI" id="CHEBI:30013"/>
        <dbReference type="ChEBI" id="CHEBI:43474"/>
        <dbReference type="ChEBI" id="CHEBI:61977"/>
        <dbReference type="EC" id="3.1.3.16"/>
    </reaction>
</comment>
<comment type="cofactor">
    <cofactor evidence="2 5 6">
        <name>Mg(2+)</name>
        <dbReference type="ChEBI" id="CHEBI:18420"/>
    </cofactor>
    <cofactor evidence="2">
        <name>Mn(2+)</name>
        <dbReference type="ChEBI" id="CHEBI:29035"/>
    </cofactor>
    <text evidence="5">Binds 2 magnesium or manganese ions per subunit.</text>
</comment>
<comment type="subunit">
    <text evidence="3 4 5 6">Component of a complex containing fem-1, fem-2 and fem-3 (PubMed:23760267). Interacts (via N-terminus) with fem-1 and fem-3 (PubMed:17609115, PubMed:23760267, PubMed:8824590). Component of the CBC(fem-1) E3 ubiquitin-protein ligase complex, at least composed of cul-2, elc-1, tra-1, fem-1, fem-2 and fem-3; mediates the ubiquitination and subsequent proteasomal degradation of tra-1 (PubMed:17609115). Interacts with tra-1 (PubMed:17609115). Interacts with sel-10 (PubMed:15306688).</text>
</comment>
<comment type="interaction">
    <interactant intactId="EBI-1998402">
        <id>P49594</id>
    </interactant>
    <interactant intactId="EBI-1998155">
        <id>P17221</id>
        <label>fem-1</label>
    </interactant>
    <organismsDiffer>false</organismsDiffer>
    <experiments>3</experiments>
</comment>
<comment type="interaction">
    <interactant intactId="EBI-1998402">
        <id>P49594</id>
    </interactant>
    <interactant intactId="EBI-323098">
        <id>Q93794</id>
        <label>sel-10</label>
    </interactant>
    <organismsDiffer>false</organismsDiffer>
    <experiments>2</experiments>
</comment>
<comment type="interaction">
    <interactant intactId="EBI-1998402">
        <id>P49594</id>
    </interactant>
    <interactant intactId="EBI-367214">
        <id>P34708-1</id>
        <label>tra-1</label>
    </interactant>
    <organismsDiffer>false</organismsDiffer>
    <experiments>2</experiments>
</comment>
<comment type="similarity">
    <text evidence="9">Belongs to the PP2C family.</text>
</comment>
<evidence type="ECO:0000255" key="1">
    <source>
        <dbReference type="PROSITE-ProRule" id="PRU01082"/>
    </source>
</evidence>
<evidence type="ECO:0000269" key="2">
    <source>
    </source>
</evidence>
<evidence type="ECO:0000269" key="3">
    <source>
    </source>
</evidence>
<evidence type="ECO:0000269" key="4">
    <source>
    </source>
</evidence>
<evidence type="ECO:0000269" key="5">
    <source>
    </source>
</evidence>
<evidence type="ECO:0000269" key="6">
    <source>
    </source>
</evidence>
<evidence type="ECO:0000303" key="7">
    <source>
    </source>
</evidence>
<evidence type="ECO:0000303" key="8">
    <source>
    </source>
</evidence>
<evidence type="ECO:0000305" key="9"/>
<evidence type="ECO:0000312" key="10">
    <source>
        <dbReference type="WormBase" id="T19C3.8"/>
    </source>
</evidence>
<evidence type="ECO:0007744" key="11">
    <source>
        <dbReference type="PDB" id="4JND"/>
    </source>
</evidence>
<evidence type="ECO:0007829" key="12">
    <source>
        <dbReference type="PDB" id="4JND"/>
    </source>
</evidence>
<gene>
    <name evidence="10" type="primary">fem-2</name>
    <name evidence="10" type="ORF">T19C3.8</name>
</gene>
<protein>
    <recommendedName>
        <fullName evidence="9">Protein phosphatase fem-2</fullName>
        <ecNumber evidence="2 5 6">3.1.3.16</ecNumber>
    </recommendedName>
    <alternativeName>
        <fullName evidence="7">Ca(2+)/calmodulin-dependent protein kinase phosphatase</fullName>
        <shortName evidence="7">CaM-kinase phosphatase</shortName>
        <shortName evidence="7">CaMKPase</shortName>
    </alternativeName>
    <alternativeName>
        <fullName evidence="10">Feminization of XX and XO animals protein 2</fullName>
    </alternativeName>
    <alternativeName>
        <fullName evidence="8">Sex-determining protein fem-2</fullName>
    </alternativeName>
</protein>